<proteinExistence type="inferred from homology"/>
<reference key="1">
    <citation type="journal article" date="2003" name="Genome Res.">
        <title>Genome sequence of an M3 strain of Streptococcus pyogenes reveals a large-scale genomic rearrangement in invasive strains and new insights into phage evolution.</title>
        <authorList>
            <person name="Nakagawa I."/>
            <person name="Kurokawa K."/>
            <person name="Yamashita A."/>
            <person name="Nakata M."/>
            <person name="Tomiyasu Y."/>
            <person name="Okahashi N."/>
            <person name="Kawabata S."/>
            <person name="Yamazaki K."/>
            <person name="Shiba T."/>
            <person name="Yasunaga T."/>
            <person name="Hayashi H."/>
            <person name="Hattori M."/>
            <person name="Hamada S."/>
        </authorList>
    </citation>
    <scope>NUCLEOTIDE SEQUENCE [LARGE SCALE GENOMIC DNA]</scope>
    <source>
        <strain>SSI-1</strain>
    </source>
</reference>
<comment type="function">
    <text evidence="1">Required for the formation of a threonylcarbamoyl group on adenosine at position 37 (t(6)A37) in tRNAs that read codons beginning with adenine. Is involved in the transfer of the threonylcarbamoyl moiety of threonylcarbamoyl-AMP (TC-AMP) to the N6 group of A37, together with TsaE and TsaB. TsaD likely plays a direct catalytic role in this reaction.</text>
</comment>
<comment type="catalytic activity">
    <reaction evidence="1">
        <text>L-threonylcarbamoyladenylate + adenosine(37) in tRNA = N(6)-L-threonylcarbamoyladenosine(37) in tRNA + AMP + H(+)</text>
        <dbReference type="Rhea" id="RHEA:37059"/>
        <dbReference type="Rhea" id="RHEA-COMP:10162"/>
        <dbReference type="Rhea" id="RHEA-COMP:10163"/>
        <dbReference type="ChEBI" id="CHEBI:15378"/>
        <dbReference type="ChEBI" id="CHEBI:73682"/>
        <dbReference type="ChEBI" id="CHEBI:74411"/>
        <dbReference type="ChEBI" id="CHEBI:74418"/>
        <dbReference type="ChEBI" id="CHEBI:456215"/>
        <dbReference type="EC" id="2.3.1.234"/>
    </reaction>
</comment>
<comment type="cofactor">
    <cofactor evidence="1">
        <name>Fe(2+)</name>
        <dbReference type="ChEBI" id="CHEBI:29033"/>
    </cofactor>
    <text evidence="1">Binds 1 Fe(2+) ion per subunit.</text>
</comment>
<comment type="subcellular location">
    <subcellularLocation>
        <location evidence="1">Cytoplasm</location>
    </subcellularLocation>
</comment>
<comment type="similarity">
    <text evidence="1">Belongs to the KAE1 / TsaD family.</text>
</comment>
<gene>
    <name evidence="1" type="primary">tsaD</name>
    <name type="synonym">gcp</name>
    <name type="ordered locus">SPs0251</name>
</gene>
<evidence type="ECO:0000255" key="1">
    <source>
        <dbReference type="HAMAP-Rule" id="MF_01445"/>
    </source>
</evidence>
<feature type="chain" id="PRO_0000411452" description="tRNA N6-adenosine threonylcarbamoyltransferase">
    <location>
        <begin position="1"/>
        <end position="342"/>
    </location>
</feature>
<feature type="binding site" evidence="1">
    <location>
        <position position="114"/>
    </location>
    <ligand>
        <name>Fe cation</name>
        <dbReference type="ChEBI" id="CHEBI:24875"/>
    </ligand>
</feature>
<feature type="binding site" evidence="1">
    <location>
        <position position="118"/>
    </location>
    <ligand>
        <name>Fe cation</name>
        <dbReference type="ChEBI" id="CHEBI:24875"/>
    </ligand>
</feature>
<feature type="binding site" evidence="1">
    <location>
        <begin position="136"/>
        <end position="140"/>
    </location>
    <ligand>
        <name>substrate</name>
    </ligand>
</feature>
<feature type="binding site" evidence="1">
    <location>
        <position position="169"/>
    </location>
    <ligand>
        <name>substrate</name>
    </ligand>
</feature>
<feature type="binding site" evidence="1">
    <location>
        <position position="182"/>
    </location>
    <ligand>
        <name>substrate</name>
    </ligand>
</feature>
<feature type="binding site" evidence="1">
    <location>
        <position position="186"/>
    </location>
    <ligand>
        <name>substrate</name>
    </ligand>
</feature>
<feature type="binding site" evidence="1">
    <location>
        <position position="275"/>
    </location>
    <ligand>
        <name>substrate</name>
    </ligand>
</feature>
<feature type="binding site" evidence="1">
    <location>
        <position position="301"/>
    </location>
    <ligand>
        <name>Fe cation</name>
        <dbReference type="ChEBI" id="CHEBI:24875"/>
    </ligand>
</feature>
<sequence>MTDRYILAVESSCDETSVAILKNESTLLSNVIASQVESHKRFGGVVPEVASRHHVEVITTCFEDALQEAGISASDLSAVAVTYGPGLVGALLVGLAAAKAFAWANHLPLIPVNHMAGHLMAAREQKPLVYPLIALLVSGGHTELVYVPEPGDYHIIGETRDDAVGEAYDKVGRVMGLTYPAGREIDQLAHKGQDTYHFPRAMITEDHLEFSFSGLKSAFINLHHNAKQKGDELILEDLCASFQAAVLDILLAKTKKALSRYPAKMLVVAGGVAANQGLRDRLAQEITHIEVVIPKLRLCGDNAGMIALAAAIEYDKQHFANMSLNAKPSLAFDQFPDSFVIN</sequence>
<keyword id="KW-0012">Acyltransferase</keyword>
<keyword id="KW-0963">Cytoplasm</keyword>
<keyword id="KW-0408">Iron</keyword>
<keyword id="KW-0479">Metal-binding</keyword>
<keyword id="KW-0808">Transferase</keyword>
<keyword id="KW-0819">tRNA processing</keyword>
<accession>P0DD29</accession>
<accession>Q79YG7</accession>
<accession>Q7CES0</accession>
<dbReference type="EC" id="2.3.1.234" evidence="1"/>
<dbReference type="EMBL" id="BA000034">
    <property type="protein sequence ID" value="BAC63346.1"/>
    <property type="molecule type" value="Genomic_DNA"/>
</dbReference>
<dbReference type="RefSeq" id="WP_002988178.1">
    <property type="nucleotide sequence ID" value="NC_004606.1"/>
</dbReference>
<dbReference type="SMR" id="P0DD29"/>
<dbReference type="GeneID" id="69900251"/>
<dbReference type="KEGG" id="sps:SPs0251"/>
<dbReference type="HOGENOM" id="CLU_023208_0_2_9"/>
<dbReference type="GO" id="GO:0005737">
    <property type="term" value="C:cytoplasm"/>
    <property type="evidence" value="ECO:0007669"/>
    <property type="project" value="UniProtKB-SubCell"/>
</dbReference>
<dbReference type="GO" id="GO:0005506">
    <property type="term" value="F:iron ion binding"/>
    <property type="evidence" value="ECO:0007669"/>
    <property type="project" value="UniProtKB-UniRule"/>
</dbReference>
<dbReference type="GO" id="GO:0061711">
    <property type="term" value="F:N(6)-L-threonylcarbamoyladenine synthase activity"/>
    <property type="evidence" value="ECO:0007669"/>
    <property type="project" value="UniProtKB-EC"/>
</dbReference>
<dbReference type="GO" id="GO:0002949">
    <property type="term" value="P:tRNA threonylcarbamoyladenosine modification"/>
    <property type="evidence" value="ECO:0007669"/>
    <property type="project" value="UniProtKB-UniRule"/>
</dbReference>
<dbReference type="CDD" id="cd24133">
    <property type="entry name" value="ASKHA_NBD_TsaD_bac"/>
    <property type="match status" value="1"/>
</dbReference>
<dbReference type="FunFam" id="3.30.420.40:FF:000012">
    <property type="entry name" value="tRNA N6-adenosine threonylcarbamoyltransferase"/>
    <property type="match status" value="1"/>
</dbReference>
<dbReference type="FunFam" id="3.30.420.40:FF:000040">
    <property type="entry name" value="tRNA N6-adenosine threonylcarbamoyltransferase"/>
    <property type="match status" value="1"/>
</dbReference>
<dbReference type="Gene3D" id="3.30.420.40">
    <property type="match status" value="2"/>
</dbReference>
<dbReference type="HAMAP" id="MF_01445">
    <property type="entry name" value="TsaD"/>
    <property type="match status" value="1"/>
</dbReference>
<dbReference type="InterPro" id="IPR043129">
    <property type="entry name" value="ATPase_NBD"/>
</dbReference>
<dbReference type="InterPro" id="IPR000905">
    <property type="entry name" value="Gcp-like_dom"/>
</dbReference>
<dbReference type="InterPro" id="IPR017861">
    <property type="entry name" value="KAE1/TsaD"/>
</dbReference>
<dbReference type="InterPro" id="IPR022450">
    <property type="entry name" value="TsaD"/>
</dbReference>
<dbReference type="NCBIfam" id="TIGR00329">
    <property type="entry name" value="gcp_kae1"/>
    <property type="match status" value="1"/>
</dbReference>
<dbReference type="NCBIfam" id="TIGR03723">
    <property type="entry name" value="T6A_TsaD_YgjD"/>
    <property type="match status" value="1"/>
</dbReference>
<dbReference type="PANTHER" id="PTHR11735">
    <property type="entry name" value="TRNA N6-ADENOSINE THREONYLCARBAMOYLTRANSFERASE"/>
    <property type="match status" value="1"/>
</dbReference>
<dbReference type="PANTHER" id="PTHR11735:SF6">
    <property type="entry name" value="TRNA N6-ADENOSINE THREONYLCARBAMOYLTRANSFERASE, MITOCHONDRIAL"/>
    <property type="match status" value="1"/>
</dbReference>
<dbReference type="Pfam" id="PF00814">
    <property type="entry name" value="TsaD"/>
    <property type="match status" value="1"/>
</dbReference>
<dbReference type="PRINTS" id="PR00789">
    <property type="entry name" value="OSIALOPTASE"/>
</dbReference>
<dbReference type="SUPFAM" id="SSF53067">
    <property type="entry name" value="Actin-like ATPase domain"/>
    <property type="match status" value="1"/>
</dbReference>
<organism>
    <name type="scientific">Streptococcus pyogenes serotype M3 (strain SSI-1)</name>
    <dbReference type="NCBI Taxonomy" id="193567"/>
    <lineage>
        <taxon>Bacteria</taxon>
        <taxon>Bacillati</taxon>
        <taxon>Bacillota</taxon>
        <taxon>Bacilli</taxon>
        <taxon>Lactobacillales</taxon>
        <taxon>Streptococcaceae</taxon>
        <taxon>Streptococcus</taxon>
    </lineage>
</organism>
<name>TSAD_STRPQ</name>
<protein>
    <recommendedName>
        <fullName evidence="1">tRNA N6-adenosine threonylcarbamoyltransferase</fullName>
        <ecNumber evidence="1">2.3.1.234</ecNumber>
    </recommendedName>
    <alternativeName>
        <fullName evidence="1">N6-L-threonylcarbamoyladenine synthase</fullName>
        <shortName evidence="1">t(6)A synthase</shortName>
    </alternativeName>
    <alternativeName>
        <fullName evidence="1">t(6)A37 threonylcarbamoyladenosine biosynthesis protein TsaD</fullName>
    </alternativeName>
    <alternativeName>
        <fullName evidence="1">tRNA threonylcarbamoyladenosine biosynthesis protein TsaD</fullName>
    </alternativeName>
</protein>